<name>PSEH_CAMJE</name>
<accession>Q0P8U4</accession>
<feature type="chain" id="PRO_0000418962" description="Acetyltransferase PseH">
    <location>
        <begin position="1"/>
        <end position="157"/>
    </location>
</feature>
<feature type="domain" description="N-acetyltransferase" evidence="2">
    <location>
        <begin position="5"/>
        <end position="152"/>
    </location>
</feature>
<keyword id="KW-0012">Acyltransferase</keyword>
<keyword id="KW-1185">Reference proteome</keyword>
<keyword id="KW-0808">Transferase</keyword>
<organism>
    <name type="scientific">Campylobacter jejuni subsp. jejuni serotype O:2 (strain ATCC 700819 / NCTC 11168)</name>
    <dbReference type="NCBI Taxonomy" id="192222"/>
    <lineage>
        <taxon>Bacteria</taxon>
        <taxon>Pseudomonadati</taxon>
        <taxon>Campylobacterota</taxon>
        <taxon>Epsilonproteobacteria</taxon>
        <taxon>Campylobacterales</taxon>
        <taxon>Campylobacteraceae</taxon>
        <taxon>Campylobacter</taxon>
    </lineage>
</organism>
<proteinExistence type="inferred from homology"/>
<comment type="function">
    <text evidence="1">Catalyzes the third step in the biosynthesis of pseudaminic acid, a sialic-acid-like sugar that is used to modify flagellin. Mediates N-4 acetylation of UDP-4-amino-4,6-dideoxy-beta-L-AltNAc to form UDP-2,4-diacetamido-2,4,6-trideoxy-beta-L-altropyranose (By similarity).</text>
</comment>
<protein>
    <recommendedName>
        <fullName>Acetyltransferase PseH</fullName>
        <ecNumber>2.3.1.-</ecNumber>
    </recommendedName>
    <alternativeName>
        <fullName>Pseudaminic acid biosynthesis protein H</fullName>
    </alternativeName>
</protein>
<evidence type="ECO:0000250" key="1"/>
<evidence type="ECO:0000255" key="2">
    <source>
        <dbReference type="PROSITE-ProRule" id="PRU00532"/>
    </source>
</evidence>
<reference key="1">
    <citation type="journal article" date="2000" name="Nature">
        <title>The genome sequence of the food-borne pathogen Campylobacter jejuni reveals hypervariable sequences.</title>
        <authorList>
            <person name="Parkhill J."/>
            <person name="Wren B.W."/>
            <person name="Mungall K.L."/>
            <person name="Ketley J.M."/>
            <person name="Churcher C.M."/>
            <person name="Basham D."/>
            <person name="Chillingworth T."/>
            <person name="Davies R.M."/>
            <person name="Feltwell T."/>
            <person name="Holroyd S."/>
            <person name="Jagels K."/>
            <person name="Karlyshev A.V."/>
            <person name="Moule S."/>
            <person name="Pallen M.J."/>
            <person name="Penn C.W."/>
            <person name="Quail M.A."/>
            <person name="Rajandream M.A."/>
            <person name="Rutherford K.M."/>
            <person name="van Vliet A.H.M."/>
            <person name="Whitehead S."/>
            <person name="Barrell B.G."/>
        </authorList>
    </citation>
    <scope>NUCLEOTIDE SEQUENCE [LARGE SCALE GENOMIC DNA]</scope>
    <source>
        <strain>ATCC 700819 / NCTC 11168</strain>
    </source>
</reference>
<sequence>MIKLKNFAELNSQEIKLIFKWRNHPDISQFMKTKHIDFEEHLRFIRNLHQDSNKKYFLVFQDEQIIGVIDFVNITTKSCEFGLYAIPDLKGVGQVLMNEIKKYAFEILKVDTLKAYVFKDNHKALKLYQQNHFTIYDEDKDFYYVCLKQSHCKALPS</sequence>
<gene>
    <name type="primary">pseH</name>
    <name type="ordered locus">Cj1313</name>
</gene>
<dbReference type="EC" id="2.3.1.-"/>
<dbReference type="EMBL" id="AL111168">
    <property type="protein sequence ID" value="CAL35427.1"/>
    <property type="molecule type" value="Genomic_DNA"/>
</dbReference>
<dbReference type="PIR" id="F81274">
    <property type="entry name" value="F81274"/>
</dbReference>
<dbReference type="RefSeq" id="WP_002858467.1">
    <property type="nucleotide sequence ID" value="NZ_SZUC01000001.1"/>
</dbReference>
<dbReference type="RefSeq" id="YP_002344703.1">
    <property type="nucleotide sequence ID" value="NC_002163.1"/>
</dbReference>
<dbReference type="SMR" id="Q0P8U4"/>
<dbReference type="IntAct" id="Q0P8U4">
    <property type="interactions" value="17"/>
</dbReference>
<dbReference type="STRING" id="192222.Cj1313"/>
<dbReference type="PaxDb" id="192222-Cj1313"/>
<dbReference type="DNASU" id="905605"/>
<dbReference type="EnsemblBacteria" id="CAL35427">
    <property type="protein sequence ID" value="CAL35427"/>
    <property type="gene ID" value="Cj1313"/>
</dbReference>
<dbReference type="GeneID" id="905605"/>
<dbReference type="KEGG" id="cje:Cj1313"/>
<dbReference type="PATRIC" id="fig|192222.6.peg.1295"/>
<dbReference type="eggNOG" id="COG1670">
    <property type="taxonomic scope" value="Bacteria"/>
</dbReference>
<dbReference type="HOGENOM" id="CLU_013985_20_1_7"/>
<dbReference type="OrthoDB" id="5396834at2"/>
<dbReference type="Proteomes" id="UP000000799">
    <property type="component" value="Chromosome"/>
</dbReference>
<dbReference type="GO" id="GO:0016747">
    <property type="term" value="F:acyltransferase activity, transferring groups other than amino-acyl groups"/>
    <property type="evidence" value="ECO:0007669"/>
    <property type="project" value="InterPro"/>
</dbReference>
<dbReference type="CDD" id="cd04301">
    <property type="entry name" value="NAT_SF"/>
    <property type="match status" value="1"/>
</dbReference>
<dbReference type="Gene3D" id="3.40.630.30">
    <property type="match status" value="1"/>
</dbReference>
<dbReference type="InterPro" id="IPR016181">
    <property type="entry name" value="Acyl_CoA_acyltransferase"/>
</dbReference>
<dbReference type="InterPro" id="IPR000182">
    <property type="entry name" value="GNAT_dom"/>
</dbReference>
<dbReference type="InterPro" id="IPR020036">
    <property type="entry name" value="PseH"/>
</dbReference>
<dbReference type="NCBIfam" id="TIGR03585">
    <property type="entry name" value="PseH"/>
    <property type="match status" value="1"/>
</dbReference>
<dbReference type="PANTHER" id="PTHR43415:SF3">
    <property type="entry name" value="GNAT-FAMILY ACETYLTRANSFERASE"/>
    <property type="match status" value="1"/>
</dbReference>
<dbReference type="PANTHER" id="PTHR43415">
    <property type="entry name" value="SPERMIDINE N(1)-ACETYLTRANSFERASE"/>
    <property type="match status" value="1"/>
</dbReference>
<dbReference type="Pfam" id="PF13302">
    <property type="entry name" value="Acetyltransf_3"/>
    <property type="match status" value="1"/>
</dbReference>
<dbReference type="SUPFAM" id="SSF55729">
    <property type="entry name" value="Acyl-CoA N-acyltransferases (Nat)"/>
    <property type="match status" value="1"/>
</dbReference>
<dbReference type="PROSITE" id="PS51186">
    <property type="entry name" value="GNAT"/>
    <property type="match status" value="1"/>
</dbReference>